<dbReference type="EC" id="4.2.1.-" evidence="4"/>
<dbReference type="EMBL" id="U00096">
    <property type="protein sequence ID" value="AAC73910.1"/>
    <property type="molecule type" value="Genomic_DNA"/>
</dbReference>
<dbReference type="EMBL" id="AP009048">
    <property type="protein sequence ID" value="BAA35504.2"/>
    <property type="molecule type" value="Genomic_DNA"/>
</dbReference>
<dbReference type="PIR" id="G64819">
    <property type="entry name" value="G64819"/>
</dbReference>
<dbReference type="RefSeq" id="NP_415344.1">
    <property type="nucleotide sequence ID" value="NC_000913.3"/>
</dbReference>
<dbReference type="RefSeq" id="WP_000209309.1">
    <property type="nucleotide sequence ID" value="NZ_LN832404.1"/>
</dbReference>
<dbReference type="PDB" id="8ID7">
    <property type="method" value="X-ray"/>
    <property type="resolution" value="2.65 A"/>
    <property type="chains" value="A=1-810"/>
</dbReference>
<dbReference type="PDB" id="8YJN">
    <property type="method" value="X-ray"/>
    <property type="resolution" value="2.42 A"/>
    <property type="chains" value="A=1-810"/>
</dbReference>
<dbReference type="PDBsum" id="8ID7"/>
<dbReference type="PDBsum" id="8YJN"/>
<dbReference type="SMR" id="P75793"/>
<dbReference type="BioGRID" id="4259978">
    <property type="interactions" value="9"/>
</dbReference>
<dbReference type="FunCoup" id="P75793">
    <property type="interactions" value="33"/>
</dbReference>
<dbReference type="IntAct" id="P75793">
    <property type="interactions" value="6"/>
</dbReference>
<dbReference type="STRING" id="511145.b0823"/>
<dbReference type="PaxDb" id="511145-b0823"/>
<dbReference type="EnsemblBacteria" id="AAC73910">
    <property type="protein sequence ID" value="AAC73910"/>
    <property type="gene ID" value="b0823"/>
</dbReference>
<dbReference type="GeneID" id="945444"/>
<dbReference type="KEGG" id="ecj:JW0807"/>
<dbReference type="KEGG" id="eco:b0823"/>
<dbReference type="KEGG" id="ecoc:C3026_05170"/>
<dbReference type="PATRIC" id="fig|1411691.4.peg.1455"/>
<dbReference type="EchoBASE" id="EB3112"/>
<dbReference type="eggNOG" id="COG1882">
    <property type="taxonomic scope" value="Bacteria"/>
</dbReference>
<dbReference type="InParanoid" id="P75793"/>
<dbReference type="OMA" id="TYYAGTS"/>
<dbReference type="OrthoDB" id="9803969at2"/>
<dbReference type="PhylomeDB" id="P75793"/>
<dbReference type="BioCyc" id="EcoCyc:G6426-MONOMER"/>
<dbReference type="PRO" id="PR:P75793"/>
<dbReference type="Proteomes" id="UP000000625">
    <property type="component" value="Chromosome"/>
</dbReference>
<dbReference type="GO" id="GO:0005829">
    <property type="term" value="C:cytosol"/>
    <property type="evidence" value="ECO:0000314"/>
    <property type="project" value="EcoCyc"/>
</dbReference>
<dbReference type="GO" id="GO:0016829">
    <property type="term" value="F:lyase activity"/>
    <property type="evidence" value="ECO:0007669"/>
    <property type="project" value="UniProtKB-KW"/>
</dbReference>
<dbReference type="CDD" id="cd01677">
    <property type="entry name" value="PFL2_DhaB_BssA"/>
    <property type="match status" value="1"/>
</dbReference>
<dbReference type="FunFam" id="3.20.70.20:FF:000008">
    <property type="entry name" value="Hypothetical formate acetyltransferase 3"/>
    <property type="match status" value="1"/>
</dbReference>
<dbReference type="Gene3D" id="3.20.70.20">
    <property type="match status" value="1"/>
</dbReference>
<dbReference type="InterPro" id="IPR019777">
    <property type="entry name" value="Form_AcTrfase_GR_CS"/>
</dbReference>
<dbReference type="InterPro" id="IPR001150">
    <property type="entry name" value="Gly_radical"/>
</dbReference>
<dbReference type="InterPro" id="IPR051215">
    <property type="entry name" value="GRE"/>
</dbReference>
<dbReference type="InterPro" id="IPR010098">
    <property type="entry name" value="PFL2/GDeHydtase_fam"/>
</dbReference>
<dbReference type="InterPro" id="IPR004184">
    <property type="entry name" value="PFL_dom"/>
</dbReference>
<dbReference type="NCBIfam" id="TIGR01774">
    <property type="entry name" value="PFL2-3"/>
    <property type="match status" value="1"/>
</dbReference>
<dbReference type="PANTHER" id="PTHR43641:SF2">
    <property type="entry name" value="DEHYDRATASE YBIW-RELATED"/>
    <property type="match status" value="1"/>
</dbReference>
<dbReference type="PANTHER" id="PTHR43641">
    <property type="entry name" value="FORMATE ACETYLTRANSFERASE 3-RELATED"/>
    <property type="match status" value="1"/>
</dbReference>
<dbReference type="Pfam" id="PF01228">
    <property type="entry name" value="Gly_radical"/>
    <property type="match status" value="1"/>
</dbReference>
<dbReference type="Pfam" id="PF02901">
    <property type="entry name" value="PFL-like"/>
    <property type="match status" value="1"/>
</dbReference>
<dbReference type="PIRSF" id="PIRSF000379">
    <property type="entry name" value="For_Ac_trans_1"/>
    <property type="match status" value="1"/>
</dbReference>
<dbReference type="SUPFAM" id="SSF51998">
    <property type="entry name" value="PFL-like glycyl radical enzymes"/>
    <property type="match status" value="1"/>
</dbReference>
<dbReference type="PROSITE" id="PS00850">
    <property type="entry name" value="GLY_RADICAL_1"/>
    <property type="match status" value="1"/>
</dbReference>
<dbReference type="PROSITE" id="PS51149">
    <property type="entry name" value="GLY_RADICAL_2"/>
    <property type="match status" value="1"/>
</dbReference>
<dbReference type="PROSITE" id="PS51554">
    <property type="entry name" value="PFL"/>
    <property type="match status" value="1"/>
</dbReference>
<accession>P75793</accession>
<comment type="function">
    <text evidence="5">Probably shows dehydratase activity.</text>
</comment>
<comment type="miscellaneous">
    <text evidence="5">Contains a dehydratase motif that is predictive of enzyme function.</text>
</comment>
<comment type="similarity">
    <text evidence="4">Belongs to the glycyl radical enzyme (GRE) family.</text>
</comment>
<reference key="1">
    <citation type="journal article" date="1996" name="DNA Res.">
        <title>A 718-kb DNA sequence of the Escherichia coli K-12 genome corresponding to the 12.7-28.0 min region on the linkage map.</title>
        <authorList>
            <person name="Oshima T."/>
            <person name="Aiba H."/>
            <person name="Baba T."/>
            <person name="Fujita K."/>
            <person name="Hayashi K."/>
            <person name="Honjo A."/>
            <person name="Ikemoto K."/>
            <person name="Inada T."/>
            <person name="Itoh T."/>
            <person name="Kajihara M."/>
            <person name="Kanai K."/>
            <person name="Kashimoto K."/>
            <person name="Kimura S."/>
            <person name="Kitagawa M."/>
            <person name="Makino K."/>
            <person name="Masuda S."/>
            <person name="Miki T."/>
            <person name="Mizobuchi K."/>
            <person name="Mori H."/>
            <person name="Motomura K."/>
            <person name="Nakamura Y."/>
            <person name="Nashimoto H."/>
            <person name="Nishio Y."/>
            <person name="Saito N."/>
            <person name="Sampei G."/>
            <person name="Seki Y."/>
            <person name="Tagami H."/>
            <person name="Takemoto K."/>
            <person name="Wada C."/>
            <person name="Yamamoto Y."/>
            <person name="Yano M."/>
            <person name="Horiuchi T."/>
        </authorList>
    </citation>
    <scope>NUCLEOTIDE SEQUENCE [LARGE SCALE GENOMIC DNA]</scope>
    <source>
        <strain>K12 / W3110 / ATCC 27325 / DSM 5911</strain>
    </source>
</reference>
<reference key="2">
    <citation type="journal article" date="1997" name="Science">
        <title>The complete genome sequence of Escherichia coli K-12.</title>
        <authorList>
            <person name="Blattner F.R."/>
            <person name="Plunkett G. III"/>
            <person name="Bloch C.A."/>
            <person name="Perna N.T."/>
            <person name="Burland V."/>
            <person name="Riley M."/>
            <person name="Collado-Vides J."/>
            <person name="Glasner J.D."/>
            <person name="Rode C.K."/>
            <person name="Mayhew G.F."/>
            <person name="Gregor J."/>
            <person name="Davis N.W."/>
            <person name="Kirkpatrick H.A."/>
            <person name="Goeden M.A."/>
            <person name="Rose D.J."/>
            <person name="Mau B."/>
            <person name="Shao Y."/>
        </authorList>
    </citation>
    <scope>NUCLEOTIDE SEQUENCE [LARGE SCALE GENOMIC DNA]</scope>
    <source>
        <strain>K12 / MG1655 / ATCC 47076</strain>
    </source>
</reference>
<reference key="3">
    <citation type="journal article" date="2006" name="Mol. Syst. Biol.">
        <title>Highly accurate genome sequences of Escherichia coli K-12 strains MG1655 and W3110.</title>
        <authorList>
            <person name="Hayashi K."/>
            <person name="Morooka N."/>
            <person name="Yamamoto Y."/>
            <person name="Fujita K."/>
            <person name="Isono K."/>
            <person name="Choi S."/>
            <person name="Ohtsubo E."/>
            <person name="Baba T."/>
            <person name="Wanner B.L."/>
            <person name="Mori H."/>
            <person name="Horiuchi T."/>
        </authorList>
    </citation>
    <scope>NUCLEOTIDE SEQUENCE [LARGE SCALE GENOMIC DNA]</scope>
    <source>
        <strain>K12 / W3110 / ATCC 27325 / DSM 5911</strain>
    </source>
</reference>
<reference key="4">
    <citation type="journal article" date="2017" name="Science">
        <title>A prominent glycyl radical enzyme in human gut microbiomes metabolizes trans-4-hydroxy-L-proline.</title>
        <authorList>
            <person name="Levin B.J."/>
            <person name="Huang Y.Y."/>
            <person name="Peck S.C."/>
            <person name="Wei Y."/>
            <person name="Martinez-Del Campo A."/>
            <person name="Marks J.A."/>
            <person name="Franzosa E.A."/>
            <person name="Huttenhower C."/>
            <person name="Balskus E.P."/>
        </authorList>
    </citation>
    <scope>PREDICTED FUNCTION</scope>
</reference>
<organism>
    <name type="scientific">Escherichia coli (strain K12)</name>
    <dbReference type="NCBI Taxonomy" id="83333"/>
    <lineage>
        <taxon>Bacteria</taxon>
        <taxon>Pseudomonadati</taxon>
        <taxon>Pseudomonadota</taxon>
        <taxon>Gammaproteobacteria</taxon>
        <taxon>Enterobacterales</taxon>
        <taxon>Enterobacteriaceae</taxon>
        <taxon>Escherichia</taxon>
    </lineage>
</organism>
<sequence length="810" mass="90125">MTTLKLDTLSDRIKAHKNALVHIVKPPVCTERAQHYTEMYQQHLDKPIPVRRALALAHHLANRTIWIKHDELIIGNQASEVRAAPIFPEYTVSWIEKEIDDLADRPGAGFAVSEENKRVLHEVCPWWRGQTVQDRCYGMFTDEQKGLLATGIIKAEGNMTSGDAHLAVNFPLLLEKGLDGLREEVAERRSRINLTVLEDLHGEQFLKAIDIVLVAVSEHIERFAALAREMAATETRESRRDELLAMAENCDLIAHQPPQTFWQALQLCYFIQLILQIESNGHSVSFGRMDQYLYPYYRRDVELNQTLDREHAIEMLHSCWLKLLEVNKIRSGSHSKASAGSPLYQNVTIGGQNLVDGQPMDAVNPLSYAILESCGRLRSTQPNLSVRYHAGMSNDFLDACVQVIRCGFGMPAFNNDEIVIPEFIKLGIEPQDAYDYAAIGCIETAVGGKWGYRCTGMSFINFARVMLAALEGGHDATSGKVFLPQEKALSAGNFNNFDEVMDAWDTQIRYYTRKSIEIEYVVDTMLEENVHDILCSALVDDCIERAKSIKQGGAKYDWVSGLQVGIANLGNSLAAVKKLVFEQGAIGQQQLAAALADDFDGLTHEQLRQRLINGAPKYGNDDDTVDTLLARAYQTYIDELKQYHNPRYGRGPVGGNYYAGTSSISANVPFGAQTMATPDGRKAHTPLAEGASPASGTDHLGPTAVIGSVGKLPTAAILGGVLLNQKLNPATLENESDKQKLMILLRTFFEVHKGWHIQYNIVSRETLLDAKKHPDQYRDLVVRVAGYSAFFTALSPDAQDDIIARTEHML</sequence>
<evidence type="ECO:0000255" key="1">
    <source>
        <dbReference type="PROSITE-ProRule" id="PRU00493"/>
    </source>
</evidence>
<evidence type="ECO:0000255" key="2">
    <source>
        <dbReference type="PROSITE-ProRule" id="PRU00887"/>
    </source>
</evidence>
<evidence type="ECO:0000256" key="3">
    <source>
        <dbReference type="SAM" id="MobiDB-lite"/>
    </source>
</evidence>
<evidence type="ECO:0000305" key="4"/>
<evidence type="ECO:0000305" key="5">
    <source>
    </source>
</evidence>
<evidence type="ECO:0007829" key="6">
    <source>
        <dbReference type="PDB" id="8ID7"/>
    </source>
</evidence>
<evidence type="ECO:0007829" key="7">
    <source>
        <dbReference type="PDB" id="8YJN"/>
    </source>
</evidence>
<gene>
    <name type="primary">ybiW</name>
    <name type="ordered locus">b0823</name>
    <name type="ordered locus">JW0807</name>
</gene>
<proteinExistence type="evidence at protein level"/>
<protein>
    <recommendedName>
        <fullName evidence="4">Probable dehydratase YbiW</fullName>
        <ecNumber evidence="4">4.2.1.-</ecNumber>
    </recommendedName>
</protein>
<feature type="chain" id="PRO_0000166690" description="Probable dehydratase YbiW">
    <location>
        <begin position="1"/>
        <end position="810"/>
    </location>
</feature>
<feature type="domain" description="PFL" evidence="2">
    <location>
        <begin position="11"/>
        <end position="682"/>
    </location>
</feature>
<feature type="domain" description="Glycine radical" evidence="1">
    <location>
        <begin position="689"/>
        <end position="810"/>
    </location>
</feature>
<feature type="region of interest" description="Disordered" evidence="3">
    <location>
        <begin position="677"/>
        <end position="699"/>
    </location>
</feature>
<feature type="modified residue" description="Glycine radical" evidence="1">
    <location>
        <position position="786"/>
    </location>
</feature>
<feature type="helix" evidence="7">
    <location>
        <begin position="11"/>
        <end position="21"/>
    </location>
</feature>
<feature type="helix" evidence="7">
    <location>
        <begin position="31"/>
        <end position="42"/>
    </location>
</feature>
<feature type="turn" evidence="7">
    <location>
        <begin position="43"/>
        <end position="45"/>
    </location>
</feature>
<feature type="helix" evidence="7">
    <location>
        <begin position="48"/>
        <end position="62"/>
    </location>
</feature>
<feature type="strand" evidence="7">
    <location>
        <begin position="77"/>
        <end position="80"/>
    </location>
</feature>
<feature type="turn" evidence="7">
    <location>
        <begin position="88"/>
        <end position="90"/>
    </location>
</feature>
<feature type="helix" evidence="7">
    <location>
        <begin position="93"/>
        <end position="98"/>
    </location>
</feature>
<feature type="helix" evidence="7">
    <location>
        <begin position="99"/>
        <end position="101"/>
    </location>
</feature>
<feature type="strand" evidence="6">
    <location>
        <begin position="103"/>
        <end position="105"/>
    </location>
</feature>
<feature type="helix" evidence="7">
    <location>
        <begin position="114"/>
        <end position="127"/>
    </location>
</feature>
<feature type="turn" evidence="7">
    <location>
        <begin position="128"/>
        <end position="130"/>
    </location>
</feature>
<feature type="helix" evidence="7">
    <location>
        <begin position="132"/>
        <end position="137"/>
    </location>
</feature>
<feature type="helix" evidence="7">
    <location>
        <begin position="142"/>
        <end position="150"/>
    </location>
</feature>
<feature type="strand" evidence="7">
    <location>
        <begin position="151"/>
        <end position="154"/>
    </location>
</feature>
<feature type="helix" evidence="7">
    <location>
        <begin position="156"/>
        <end position="159"/>
    </location>
</feature>
<feature type="helix" evidence="7">
    <location>
        <begin position="170"/>
        <end position="189"/>
    </location>
</feature>
<feature type="helix" evidence="7">
    <location>
        <begin position="197"/>
        <end position="231"/>
    </location>
</feature>
<feature type="helix" evidence="7">
    <location>
        <begin position="237"/>
        <end position="253"/>
    </location>
</feature>
<feature type="helix" evidence="7">
    <location>
        <begin position="261"/>
        <end position="278"/>
    </location>
</feature>
<feature type="helix" evidence="7">
    <location>
        <begin position="289"/>
        <end position="292"/>
    </location>
</feature>
<feature type="helix" evidence="7">
    <location>
        <begin position="294"/>
        <end position="301"/>
    </location>
</feature>
<feature type="helix" evidence="7">
    <location>
        <begin position="309"/>
        <end position="325"/>
    </location>
</feature>
<feature type="helix" evidence="7">
    <location>
        <begin position="332"/>
        <end position="336"/>
    </location>
</feature>
<feature type="strand" evidence="7">
    <location>
        <begin position="346"/>
        <end position="350"/>
    </location>
</feature>
<feature type="strand" evidence="7">
    <location>
        <begin position="352"/>
        <end position="355"/>
    </location>
</feature>
<feature type="strand" evidence="7">
    <location>
        <begin position="358"/>
        <end position="361"/>
    </location>
</feature>
<feature type="helix" evidence="7">
    <location>
        <begin position="365"/>
        <end position="377"/>
    </location>
</feature>
<feature type="strand" evidence="7">
    <location>
        <begin position="382"/>
        <end position="388"/>
    </location>
</feature>
<feature type="helix" evidence="7">
    <location>
        <begin position="394"/>
        <end position="405"/>
    </location>
</feature>
<feature type="strand" evidence="7">
    <location>
        <begin position="412"/>
        <end position="415"/>
    </location>
</feature>
<feature type="helix" evidence="7">
    <location>
        <begin position="416"/>
        <end position="426"/>
    </location>
</feature>
<feature type="helix" evidence="7">
    <location>
        <begin position="430"/>
        <end position="434"/>
    </location>
</feature>
<feature type="strand" evidence="7">
    <location>
        <begin position="437"/>
        <end position="439"/>
    </location>
</feature>
<feature type="turn" evidence="7">
    <location>
        <begin position="440"/>
        <end position="442"/>
    </location>
</feature>
<feature type="strand" evidence="7">
    <location>
        <begin position="443"/>
        <end position="445"/>
    </location>
</feature>
<feature type="strand" evidence="7">
    <location>
        <begin position="459"/>
        <end position="461"/>
    </location>
</feature>
<feature type="helix" evidence="7">
    <location>
        <begin position="462"/>
        <end position="469"/>
    </location>
</feature>
<feature type="turn" evidence="7">
    <location>
        <begin position="476"/>
        <end position="478"/>
    </location>
</feature>
<feature type="strand" evidence="7">
    <location>
        <begin position="481"/>
        <end position="483"/>
    </location>
</feature>
<feature type="helix" evidence="7">
    <location>
        <begin position="489"/>
        <end position="491"/>
    </location>
</feature>
<feature type="helix" evidence="7">
    <location>
        <begin position="497"/>
        <end position="529"/>
    </location>
</feature>
<feature type="helix" evidence="7">
    <location>
        <begin position="533"/>
        <end position="537"/>
    </location>
</feature>
<feature type="helix" evidence="7">
    <location>
        <begin position="542"/>
        <end position="545"/>
    </location>
</feature>
<feature type="helix" evidence="7">
    <location>
        <begin position="549"/>
        <end position="551"/>
    </location>
</feature>
<feature type="strand" evidence="7">
    <location>
        <begin position="554"/>
        <end position="560"/>
    </location>
</feature>
<feature type="strand" evidence="7">
    <location>
        <begin position="562"/>
        <end position="564"/>
    </location>
</feature>
<feature type="helix" evidence="7">
    <location>
        <begin position="566"/>
        <end position="579"/>
    </location>
</feature>
<feature type="turn" evidence="7">
    <location>
        <begin position="580"/>
        <end position="582"/>
    </location>
</feature>
<feature type="helix" evidence="7">
    <location>
        <begin position="588"/>
        <end position="596"/>
    </location>
</feature>
<feature type="turn" evidence="7">
    <location>
        <begin position="597"/>
        <end position="599"/>
    </location>
</feature>
<feature type="helix" evidence="7">
    <location>
        <begin position="601"/>
        <end position="613"/>
    </location>
</feature>
<feature type="helix" evidence="7">
    <location>
        <begin position="623"/>
        <end position="640"/>
    </location>
</feature>
<feature type="turn" evidence="7">
    <location>
        <begin position="646"/>
        <end position="649"/>
    </location>
</feature>
<feature type="strand" evidence="7">
    <location>
        <begin position="650"/>
        <end position="658"/>
    </location>
</feature>
<feature type="turn" evidence="7">
    <location>
        <begin position="664"/>
        <end position="666"/>
    </location>
</feature>
<feature type="helix" evidence="7">
    <location>
        <begin position="667"/>
        <end position="672"/>
    </location>
</feature>
<feature type="turn" evidence="7">
    <location>
        <begin position="678"/>
        <end position="680"/>
    </location>
</feature>
<feature type="helix" evidence="7">
    <location>
        <begin position="702"/>
        <end position="710"/>
    </location>
</feature>
<feature type="helix" evidence="7">
    <location>
        <begin position="714"/>
        <end position="716"/>
    </location>
</feature>
<feature type="strand" evidence="7">
    <location>
        <begin position="724"/>
        <end position="727"/>
    </location>
</feature>
<feature type="helix" evidence="7">
    <location>
        <begin position="729"/>
        <end position="732"/>
    </location>
</feature>
<feature type="helix" evidence="7">
    <location>
        <begin position="735"/>
        <end position="750"/>
    </location>
</feature>
<feature type="strand" evidence="7">
    <location>
        <begin position="756"/>
        <end position="761"/>
    </location>
</feature>
<feature type="helix" evidence="7">
    <location>
        <begin position="764"/>
        <end position="772"/>
    </location>
</feature>
<feature type="turn" evidence="7">
    <location>
        <begin position="774"/>
        <end position="776"/>
    </location>
</feature>
<feature type="strand" evidence="7">
    <location>
        <begin position="781"/>
        <end position="783"/>
    </location>
</feature>
<feature type="strand" evidence="7">
    <location>
        <begin position="785"/>
        <end position="790"/>
    </location>
</feature>
<feature type="helix" evidence="7">
    <location>
        <begin position="791"/>
        <end position="793"/>
    </location>
</feature>
<feature type="helix" evidence="7">
    <location>
        <begin position="796"/>
        <end position="803"/>
    </location>
</feature>
<keyword id="KW-0002">3D-structure</keyword>
<keyword id="KW-0456">Lyase</keyword>
<keyword id="KW-0556">Organic radical</keyword>
<keyword id="KW-1185">Reference proteome</keyword>
<name>GRE2_ECOLI</name>